<organism>
    <name type="scientific">Bos taurus</name>
    <name type="common">Bovine</name>
    <dbReference type="NCBI Taxonomy" id="9913"/>
    <lineage>
        <taxon>Eukaryota</taxon>
        <taxon>Metazoa</taxon>
        <taxon>Chordata</taxon>
        <taxon>Craniata</taxon>
        <taxon>Vertebrata</taxon>
        <taxon>Euteleostomi</taxon>
        <taxon>Mammalia</taxon>
        <taxon>Eutheria</taxon>
        <taxon>Laurasiatheria</taxon>
        <taxon>Artiodactyla</taxon>
        <taxon>Ruminantia</taxon>
        <taxon>Pecora</taxon>
        <taxon>Bovidae</taxon>
        <taxon>Bovinae</taxon>
        <taxon>Bos</taxon>
    </lineage>
</organism>
<gene>
    <name evidence="3" type="primary">PLCZ1</name>
    <name evidence="13" type="synonym">PLCZ</name>
</gene>
<keyword id="KW-0106">Calcium</keyword>
<keyword id="KW-0963">Cytoplasm</keyword>
<keyword id="KW-0217">Developmental protein</keyword>
<keyword id="KW-0278">Fertilization</keyword>
<keyword id="KW-0378">Hydrolase</keyword>
<keyword id="KW-0442">Lipid degradation</keyword>
<keyword id="KW-0443">Lipid metabolism</keyword>
<keyword id="KW-0539">Nucleus</keyword>
<keyword id="KW-1185">Reference proteome</keyword>
<keyword id="KW-0807">Transducer</keyword>
<proteinExistence type="evidence at transcript level"/>
<name>PLCZ1_BOVIN</name>
<reference evidence="14" key="1">
    <citation type="submission" date="2004-06" db="EMBL/GenBank/DDBJ databases">
        <title>Molecular cloning and characterization of PLC-zeta in cattle.</title>
        <authorList>
            <person name="Kumar K.G."/>
            <person name="Chomdej S."/>
            <person name="Wimmers K."/>
            <person name="Schellander K."/>
        </authorList>
    </citation>
    <scope>NUCLEOTIDE SEQUENCE [MRNA]</scope>
</reference>
<reference evidence="14" key="2">
    <citation type="submission" date="2006-04" db="EMBL/GenBank/DDBJ databases">
        <authorList>
            <consortium name="NIH - Mammalian Gene Collection (MGC) project"/>
        </authorList>
    </citation>
    <scope>NUCLEOTIDE SEQUENCE [LARGE SCALE MRNA]</scope>
    <source>
        <strain evidence="13">Crossbred X Angus</strain>
        <tissue evidence="13">Liver</tissue>
    </source>
</reference>
<reference evidence="12" key="3">
    <citation type="journal article" date="2005" name="Biol. Reprod.">
        <title>Fertilization and inositol 1,4,5-trisphosphate (IP3)-induced calcium release in type-1 inositol 1,4,5-trisphosphate receptor down-regulated bovine eggs.</title>
        <authorList>
            <person name="Malcuit C."/>
            <person name="Knott J.G."/>
            <person name="He C."/>
            <person name="Wainwright T."/>
            <person name="Parys J.B."/>
            <person name="Robl J.M."/>
            <person name="Fissore R.A."/>
        </authorList>
    </citation>
    <scope>FUNCTION</scope>
</reference>
<reference evidence="12" key="4">
    <citation type="journal article" date="2008" name="BMC Dev. Biol.">
        <title>Parthenogenetic activation of bovine oocytes using bovine and murine phospholipase C zeta.</title>
        <authorList>
            <person name="Ross P.J."/>
            <person name="Beyhan Z."/>
            <person name="Iager A.E."/>
            <person name="Yoon S.-Y."/>
            <person name="Malcuit C."/>
            <person name="Schellander K."/>
            <person name="Fissore R.A."/>
            <person name="Cibelli J.B."/>
        </authorList>
    </citation>
    <scope>FUNCTION</scope>
</reference>
<accession>Q1RML2</accession>
<accession>Q5IT24</accession>
<feature type="chain" id="PRO_0000347243" description="1-phosphatidylinositol 4,5-bisphosphate phosphodiesterase zeta-1">
    <location>
        <begin position="1"/>
        <end position="634"/>
    </location>
</feature>
<feature type="domain" description="EF-hand" evidence="8">
    <location>
        <begin position="35"/>
        <end position="70"/>
    </location>
</feature>
<feature type="domain" description="PI-PLC X-box" evidence="6">
    <location>
        <begin position="155"/>
        <end position="299"/>
    </location>
</feature>
<feature type="domain" description="PI-PLC Y-box" evidence="7">
    <location>
        <begin position="376"/>
        <end position="492"/>
    </location>
</feature>
<feature type="domain" description="C2" evidence="5">
    <location>
        <begin position="492"/>
        <end position="615"/>
    </location>
</feature>
<feature type="region of interest" description="Disordered" evidence="9">
    <location>
        <begin position="312"/>
        <end position="345"/>
    </location>
</feature>
<feature type="compositionally biased region" description="Acidic residues" evidence="9">
    <location>
        <begin position="321"/>
        <end position="334"/>
    </location>
</feature>
<feature type="active site" evidence="2 6">
    <location>
        <position position="170"/>
    </location>
</feature>
<feature type="active site" evidence="2 6">
    <location>
        <position position="215"/>
    </location>
</feature>
<feature type="sequence conflict" description="In Ref. 1; AAV54518." evidence="12" ref="1">
    <original>Y</original>
    <variation>H</variation>
    <location>
        <position position="188"/>
    </location>
</feature>
<feature type="sequence conflict" description="In Ref. 1; AAV54518." evidence="12" ref="1">
    <original>K</original>
    <variation>Q</variation>
    <location>
        <position position="436"/>
    </location>
</feature>
<feature type="sequence conflict" description="In Ref. 1; AAV54518." evidence="12" ref="1">
    <original>D</original>
    <variation>G</variation>
    <location>
        <position position="506"/>
    </location>
</feature>
<feature type="sequence conflict" description="In Ref. 1; AAV54518." evidence="12" ref="1">
    <original>R</original>
    <variation>K</variation>
    <location>
        <position position="606"/>
    </location>
</feature>
<feature type="sequence conflict" description="In Ref. 1; AAV54518." evidence="12" ref="1">
    <original>I</original>
    <variation>V</variation>
    <location>
        <position position="633"/>
    </location>
</feature>
<comment type="function">
    <text evidence="3 4 10 11 12">The production of the second messenger molecules diacylglycerol (DAG) and inositol 1,4,5-trisphosphate (IP3) is mediated by activated phosphatidylinositol-specific phospholipase C enzymes. In vitro, hydrolyzes PtdIns(4,5)P2 in a Ca(2+)-dependent manner. Triggers intracellular Ca(2+) oscillations in oocytes solely during M phase and is involved in inducing oocyte activation and initiating embryonic development up to the blastocyst stage. Is therefore a strong candidate for the egg-activating soluble sperm factor that is transferred from the sperm into the egg cytoplasm following gamete membrane fusion. May exert an inhibitory effect on phospholipase-C-coupled processes that depend on calcium ions and protein kinase C, including CFTR trafficking and function.</text>
</comment>
<comment type="catalytic activity">
    <reaction evidence="4">
        <text>a 1,2-diacyl-sn-glycero-3-phospho-(1D-myo-inositol-4,5-bisphosphate) + H2O = 1D-myo-inositol 1,4,5-trisphosphate + a 1,2-diacyl-sn-glycerol + H(+)</text>
        <dbReference type="Rhea" id="RHEA:33179"/>
        <dbReference type="ChEBI" id="CHEBI:15377"/>
        <dbReference type="ChEBI" id="CHEBI:15378"/>
        <dbReference type="ChEBI" id="CHEBI:17815"/>
        <dbReference type="ChEBI" id="CHEBI:58456"/>
        <dbReference type="ChEBI" id="CHEBI:203600"/>
        <dbReference type="EC" id="3.1.4.11"/>
    </reaction>
    <physiologicalReaction direction="left-to-right" evidence="4">
        <dbReference type="Rhea" id="RHEA:33180"/>
    </physiologicalReaction>
</comment>
<comment type="cofactor">
    <cofactor evidence="4">
        <name>Ca(2+)</name>
        <dbReference type="ChEBI" id="CHEBI:29108"/>
    </cofactor>
</comment>
<comment type="subunit">
    <text evidence="1">Interacts (via its C2 domain) with PtdIns(3)P and, to a lesser extent, PtdIns(5)P in vitro.</text>
</comment>
<comment type="subcellular location">
    <subcellularLocation>
        <location evidence="4">Nucleus</location>
    </subcellularLocation>
    <subcellularLocation>
        <location evidence="4">Cytoplasm</location>
        <location evidence="4">Perinuclear region</location>
    </subcellularLocation>
    <text evidence="4">Exhibits alternative cytoplasmic/nuclear localization during development. Translocates from the pronucleus into cytoplasm upon nuclear envelope breakdown for mitosis and localizes again to the pronucleus at interphase following meiosis and mitosis (By similarity).</text>
</comment>
<comment type="domain">
    <text evidence="4">The EF-hand and C2 domains are essential for triggering Ca(2+) oscillating activity and the regulation of PLCZ1 enzyme activity.</text>
</comment>
<comment type="domain">
    <text evidence="4">The X-Y linker region between PI-PLC X-box and Y-box domains may be a target for proteolysis and may play an important regulatory role during fertilization.</text>
</comment>
<protein>
    <recommendedName>
        <fullName>1-phosphatidylinositol 4,5-bisphosphate phosphodiesterase zeta-1</fullName>
        <ecNumber>3.1.4.11</ecNumber>
    </recommendedName>
    <alternativeName>
        <fullName>Phosphoinositide phospholipase C-zeta-1</fullName>
    </alternativeName>
    <alternativeName>
        <fullName evidence="3">Phospholipase C-zeta-1</fullName>
        <shortName evidence="3">PLC-zeta-1</shortName>
    </alternativeName>
</protein>
<dbReference type="EC" id="3.1.4.11"/>
<dbReference type="EMBL" id="AY646356">
    <property type="protein sequence ID" value="AAV54518.1"/>
    <property type="molecule type" value="mRNA"/>
</dbReference>
<dbReference type="EMBL" id="BC114836">
    <property type="protein sequence ID" value="AAI14837.1"/>
    <property type="molecule type" value="mRNA"/>
</dbReference>
<dbReference type="RefSeq" id="NP_001011680.2">
    <property type="nucleotide sequence ID" value="NM_001011680.3"/>
</dbReference>
<dbReference type="RefSeq" id="XP_024847197.1">
    <property type="nucleotide sequence ID" value="XM_024991429.1"/>
</dbReference>
<dbReference type="SMR" id="Q1RML2"/>
<dbReference type="FunCoup" id="Q1RML2">
    <property type="interactions" value="151"/>
</dbReference>
<dbReference type="STRING" id="9913.ENSBTAP00000017574"/>
<dbReference type="PaxDb" id="9913-ENSBTAP00000017574"/>
<dbReference type="GeneID" id="497026"/>
<dbReference type="KEGG" id="bta:497026"/>
<dbReference type="CTD" id="89869"/>
<dbReference type="VEuPathDB" id="HostDB:ENSBTAG00000013202"/>
<dbReference type="eggNOG" id="KOG0169">
    <property type="taxonomic scope" value="Eukaryota"/>
</dbReference>
<dbReference type="HOGENOM" id="CLU_002738_0_3_1"/>
<dbReference type="InParanoid" id="Q1RML2"/>
<dbReference type="OMA" id="DAWDNDE"/>
<dbReference type="OrthoDB" id="269822at2759"/>
<dbReference type="TreeFam" id="TF313216"/>
<dbReference type="Reactome" id="R-BTA-1855204">
    <property type="pathway name" value="Synthesis of IP3 and IP4 in the cytosol"/>
</dbReference>
<dbReference type="Proteomes" id="UP000009136">
    <property type="component" value="Chromosome 5"/>
</dbReference>
<dbReference type="Bgee" id="ENSBTAG00000013202">
    <property type="expression patterns" value="Expressed in semen and 10 other cell types or tissues"/>
</dbReference>
<dbReference type="GO" id="GO:0005634">
    <property type="term" value="C:nucleus"/>
    <property type="evidence" value="ECO:0000318"/>
    <property type="project" value="GO_Central"/>
</dbReference>
<dbReference type="GO" id="GO:0048471">
    <property type="term" value="C:perinuclear region of cytoplasm"/>
    <property type="evidence" value="ECO:0007669"/>
    <property type="project" value="UniProtKB-SubCell"/>
</dbReference>
<dbReference type="GO" id="GO:0005509">
    <property type="term" value="F:calcium ion binding"/>
    <property type="evidence" value="ECO:0007669"/>
    <property type="project" value="InterPro"/>
</dbReference>
<dbReference type="GO" id="GO:0004435">
    <property type="term" value="F:phosphatidylinositol-4,5-bisphosphate phospholipase C activity"/>
    <property type="evidence" value="ECO:0000318"/>
    <property type="project" value="GO_Central"/>
</dbReference>
<dbReference type="GO" id="GO:0007343">
    <property type="term" value="P:egg activation"/>
    <property type="evidence" value="ECO:0000250"/>
    <property type="project" value="UniProtKB"/>
</dbReference>
<dbReference type="GO" id="GO:0035556">
    <property type="term" value="P:intracellular signal transduction"/>
    <property type="evidence" value="ECO:0007669"/>
    <property type="project" value="InterPro"/>
</dbReference>
<dbReference type="GO" id="GO:0016042">
    <property type="term" value="P:lipid catabolic process"/>
    <property type="evidence" value="ECO:0007669"/>
    <property type="project" value="UniProtKB-KW"/>
</dbReference>
<dbReference type="GO" id="GO:0060470">
    <property type="term" value="P:positive regulation of cytosolic calcium ion concentration involved in egg activation"/>
    <property type="evidence" value="ECO:0000318"/>
    <property type="project" value="GO_Central"/>
</dbReference>
<dbReference type="CDD" id="cd00275">
    <property type="entry name" value="C2_PLC_like"/>
    <property type="match status" value="1"/>
</dbReference>
<dbReference type="FunFam" id="1.10.238.10:FF:000005">
    <property type="entry name" value="Phosphoinositide phospholipase C"/>
    <property type="match status" value="1"/>
</dbReference>
<dbReference type="FunFam" id="2.60.40.150:FF:000147">
    <property type="entry name" value="Phosphoinositide phospholipase C"/>
    <property type="match status" value="1"/>
</dbReference>
<dbReference type="FunFam" id="3.20.20.190:FF:000027">
    <property type="entry name" value="Phosphoinositide phospholipase C"/>
    <property type="match status" value="1"/>
</dbReference>
<dbReference type="Gene3D" id="2.60.40.150">
    <property type="entry name" value="C2 domain"/>
    <property type="match status" value="1"/>
</dbReference>
<dbReference type="Gene3D" id="1.10.238.10">
    <property type="entry name" value="EF-hand"/>
    <property type="match status" value="2"/>
</dbReference>
<dbReference type="Gene3D" id="3.20.20.190">
    <property type="entry name" value="Phosphatidylinositol (PI) phosphodiesterase"/>
    <property type="match status" value="1"/>
</dbReference>
<dbReference type="InterPro" id="IPR000008">
    <property type="entry name" value="C2_dom"/>
</dbReference>
<dbReference type="InterPro" id="IPR035892">
    <property type="entry name" value="C2_domain_sf"/>
</dbReference>
<dbReference type="InterPro" id="IPR011992">
    <property type="entry name" value="EF-hand-dom_pair"/>
</dbReference>
<dbReference type="InterPro" id="IPR002048">
    <property type="entry name" value="EF_hand_dom"/>
</dbReference>
<dbReference type="InterPro" id="IPR001192">
    <property type="entry name" value="PI-PLC_fam"/>
</dbReference>
<dbReference type="InterPro" id="IPR017946">
    <property type="entry name" value="PLC-like_Pdiesterase_TIM-brl"/>
</dbReference>
<dbReference type="InterPro" id="IPR015359">
    <property type="entry name" value="PLC_EF-hand-like"/>
</dbReference>
<dbReference type="InterPro" id="IPR000909">
    <property type="entry name" value="PLipase_C_PInositol-sp_X_dom"/>
</dbReference>
<dbReference type="InterPro" id="IPR001711">
    <property type="entry name" value="PLipase_C_Pinositol-sp_Y"/>
</dbReference>
<dbReference type="PANTHER" id="PTHR10336:SF29">
    <property type="entry name" value="1-PHOSPHATIDYLINOSITOL 4,5-BISPHOSPHATE PHOSPHODIESTERASE ZETA-1"/>
    <property type="match status" value="1"/>
</dbReference>
<dbReference type="PANTHER" id="PTHR10336">
    <property type="entry name" value="PHOSPHOINOSITIDE-SPECIFIC PHOSPHOLIPASE C FAMILY PROTEIN"/>
    <property type="match status" value="1"/>
</dbReference>
<dbReference type="Pfam" id="PF00168">
    <property type="entry name" value="C2"/>
    <property type="match status" value="1"/>
</dbReference>
<dbReference type="Pfam" id="PF09279">
    <property type="entry name" value="EF-hand_like"/>
    <property type="match status" value="1"/>
</dbReference>
<dbReference type="Pfam" id="PF00388">
    <property type="entry name" value="PI-PLC-X"/>
    <property type="match status" value="1"/>
</dbReference>
<dbReference type="Pfam" id="PF00387">
    <property type="entry name" value="PI-PLC-Y"/>
    <property type="match status" value="1"/>
</dbReference>
<dbReference type="PRINTS" id="PR00390">
    <property type="entry name" value="PHPHLIPASEC"/>
</dbReference>
<dbReference type="SMART" id="SM00239">
    <property type="entry name" value="C2"/>
    <property type="match status" value="1"/>
</dbReference>
<dbReference type="SMART" id="SM00148">
    <property type="entry name" value="PLCXc"/>
    <property type="match status" value="1"/>
</dbReference>
<dbReference type="SMART" id="SM00149">
    <property type="entry name" value="PLCYc"/>
    <property type="match status" value="1"/>
</dbReference>
<dbReference type="SUPFAM" id="SSF49562">
    <property type="entry name" value="C2 domain (Calcium/lipid-binding domain, CaLB)"/>
    <property type="match status" value="1"/>
</dbReference>
<dbReference type="SUPFAM" id="SSF47473">
    <property type="entry name" value="EF-hand"/>
    <property type="match status" value="1"/>
</dbReference>
<dbReference type="SUPFAM" id="SSF51695">
    <property type="entry name" value="PLC-like phosphodiesterases"/>
    <property type="match status" value="1"/>
</dbReference>
<dbReference type="PROSITE" id="PS50004">
    <property type="entry name" value="C2"/>
    <property type="match status" value="1"/>
</dbReference>
<dbReference type="PROSITE" id="PS50222">
    <property type="entry name" value="EF_HAND_2"/>
    <property type="match status" value="1"/>
</dbReference>
<dbReference type="PROSITE" id="PS50007">
    <property type="entry name" value="PIPLC_X_DOMAIN"/>
    <property type="match status" value="1"/>
</dbReference>
<dbReference type="PROSITE" id="PS50008">
    <property type="entry name" value="PIPLC_Y_DOMAIN"/>
    <property type="match status" value="1"/>
</dbReference>
<sequence length="634" mass="73732">MENKWFLLMVRDDFKGGKITLEKALKLLEKLDIQCNTIHVKYIFKDNDRLKQGRITIEEFRTIYRIITYREEIIEIFNTYSENRKILLEKNLVEFLMREQYTLDFNKSIASEIIQKYEPIEEVKQAHQMSFEGFRRYMDSSECLLFDNKCDHVYQDMTHPLTDYFISSSHNTYLISDQLWGPSDLWGYISALVKGCRCLEIDCWDGSQNEPVVYHGYTFTSKLLFKTVIQAINKYAFLASEYPVVLSLENHCSPSQQEVMADSLLATFGDALLSYTLDNFSDRLPSPEALKFKILVRNKKIGTLHETLERKGSDMHGKVEEFEEEEEIEQEEDGSGAKEPEPVGDFQDDLAKEEQLKRVVGIPLFRKKKIKISMALSDLVIYTKVEKFKSFHHSHLYQQFNESNSIGESQARKLTKLAAREFILHTRRFITRVYPKALRADSSNFNPQEFWNVGCQMVALNFQTPGVPMDLQNGKFLDNGCSGYVLKPRFLRDKKTKFNPHKVQIDSNPLTLTIRLISGIQLPPSYQNKADTLVIVEIFGVPNDQMKQQSRVIKKNAFNPRWNETFTFVIQVPELALIRFVAENQGLIAGNEFLGQYTLPVLCMNRGYRRVPLFSKMGESLEPASLFIYVWYIR</sequence>
<evidence type="ECO:0000250" key="1"/>
<evidence type="ECO:0000250" key="2">
    <source>
        <dbReference type="UniProtKB" id="P10688"/>
    </source>
</evidence>
<evidence type="ECO:0000250" key="3">
    <source>
        <dbReference type="UniProtKB" id="Q86YW0"/>
    </source>
</evidence>
<evidence type="ECO:0000250" key="4">
    <source>
        <dbReference type="UniProtKB" id="Q8K4D7"/>
    </source>
</evidence>
<evidence type="ECO:0000255" key="5">
    <source>
        <dbReference type="PROSITE-ProRule" id="PRU00041"/>
    </source>
</evidence>
<evidence type="ECO:0000255" key="6">
    <source>
        <dbReference type="PROSITE-ProRule" id="PRU00270"/>
    </source>
</evidence>
<evidence type="ECO:0000255" key="7">
    <source>
        <dbReference type="PROSITE-ProRule" id="PRU00271"/>
    </source>
</evidence>
<evidence type="ECO:0000255" key="8">
    <source>
        <dbReference type="PROSITE-ProRule" id="PRU00448"/>
    </source>
</evidence>
<evidence type="ECO:0000256" key="9">
    <source>
        <dbReference type="SAM" id="MobiDB-lite"/>
    </source>
</evidence>
<evidence type="ECO:0000269" key="10">
    <source>
    </source>
</evidence>
<evidence type="ECO:0000269" key="11">
    <source>
    </source>
</evidence>
<evidence type="ECO:0000305" key="12"/>
<evidence type="ECO:0000312" key="13">
    <source>
        <dbReference type="EMBL" id="AAI14837.1"/>
    </source>
</evidence>
<evidence type="ECO:0000312" key="14">
    <source>
        <dbReference type="EMBL" id="AAV54518.1"/>
    </source>
</evidence>